<keyword id="KW-0963">Cytoplasm</keyword>
<keyword id="KW-0342">GTP-binding</keyword>
<keyword id="KW-0547">Nucleotide-binding</keyword>
<keyword id="KW-0648">Protein biosynthesis</keyword>
<sequence length="514" mass="58271">MSLTEEIKKRRTFAIISHPDAGKTTITEQLLYFGGEIREAGTVKGKKSGTFAKSDWMDIEKQRGISVTSSVMQFDYAGKRVNILDTPGHEDFSEDTYRTLMAVDAAVMVVDSAKGIEAQTKKLFEVVKHRNIPVFTFINKLDRDGREPLELLEELEEVLGIASYPMNWPIGMGRAFEGLYDLHNKRLELYKGDERFASIEDGDQLFANNPFYEQVKEDIELLQEAGNDFSEQAILDGDLTPVFFGSALTNFGVQTFLDTFLEFAPEPHGHKTTEGNVVDPLAKDFSGFVFKIQANMDPKHRDRIAFVRIVSGEFERGMGVNLTRTGKGAKLSNVTQFMAESRENVTNAVAGDIIGVYDTGTYQVGDTLTVGKNKFEFEPLPTFTPEIFMKVSPKNVMKQKSFHKGIEQLVQEGAIQLYKNYQTGEYMLGAVGQLQFEVFKHRMEGEYNAEVVMTPMGKKTVRWISEDDLDQRMSSSRNILAKDRFDQPVFLFENDFALRWFADKYPDVTLEEKM</sequence>
<reference key="1">
    <citation type="journal article" date="2006" name="Proc. Natl. Acad. Sci. U.S.A.">
        <title>Molecular genetic anatomy of inter- and intraserotype variation in the human bacterial pathogen group A Streptococcus.</title>
        <authorList>
            <person name="Beres S.B."/>
            <person name="Richter E.W."/>
            <person name="Nagiec M.J."/>
            <person name="Sumby P."/>
            <person name="Porcella S.F."/>
            <person name="DeLeo F.R."/>
            <person name="Musser J.M."/>
        </authorList>
    </citation>
    <scope>NUCLEOTIDE SEQUENCE [LARGE SCALE GENOMIC DNA]</scope>
    <source>
        <strain>MGAS2096</strain>
    </source>
</reference>
<proteinExistence type="inferred from homology"/>
<feature type="chain" id="PRO_1000023685" description="Peptide chain release factor 3">
    <location>
        <begin position="1"/>
        <end position="514"/>
    </location>
</feature>
<feature type="domain" description="tr-type G">
    <location>
        <begin position="8"/>
        <end position="268"/>
    </location>
</feature>
<feature type="binding site" evidence="1">
    <location>
        <begin position="17"/>
        <end position="24"/>
    </location>
    <ligand>
        <name>GTP</name>
        <dbReference type="ChEBI" id="CHEBI:37565"/>
    </ligand>
</feature>
<feature type="binding site" evidence="1">
    <location>
        <begin position="85"/>
        <end position="89"/>
    </location>
    <ligand>
        <name>GTP</name>
        <dbReference type="ChEBI" id="CHEBI:37565"/>
    </ligand>
</feature>
<feature type="binding site" evidence="1">
    <location>
        <begin position="139"/>
        <end position="142"/>
    </location>
    <ligand>
        <name>GTP</name>
        <dbReference type="ChEBI" id="CHEBI:37565"/>
    </ligand>
</feature>
<comment type="function">
    <text evidence="1">Increases the formation of ribosomal termination complexes and stimulates activities of RF-1 and RF-2. It binds guanine nucleotides and has strong preference for UGA stop codons. It may interact directly with the ribosome. The stimulation of RF-1 and RF-2 is significantly reduced by GTP and GDP, but not by GMP.</text>
</comment>
<comment type="subcellular location">
    <subcellularLocation>
        <location evidence="1">Cytoplasm</location>
    </subcellularLocation>
</comment>
<comment type="similarity">
    <text evidence="1">Belongs to the TRAFAC class translation factor GTPase superfamily. Classic translation factor GTPase family. PrfC subfamily.</text>
</comment>
<accession>Q1JAY1</accession>
<evidence type="ECO:0000255" key="1">
    <source>
        <dbReference type="HAMAP-Rule" id="MF_00072"/>
    </source>
</evidence>
<dbReference type="EMBL" id="CP000261">
    <property type="protein sequence ID" value="ABF36277.1"/>
    <property type="molecule type" value="Genomic_DNA"/>
</dbReference>
<dbReference type="SMR" id="Q1JAY1"/>
<dbReference type="KEGG" id="spj:MGAS2096_Spy1226"/>
<dbReference type="HOGENOM" id="CLU_002794_2_1_9"/>
<dbReference type="GO" id="GO:0005829">
    <property type="term" value="C:cytosol"/>
    <property type="evidence" value="ECO:0007669"/>
    <property type="project" value="TreeGrafter"/>
</dbReference>
<dbReference type="GO" id="GO:0005525">
    <property type="term" value="F:GTP binding"/>
    <property type="evidence" value="ECO:0007669"/>
    <property type="project" value="UniProtKB-UniRule"/>
</dbReference>
<dbReference type="GO" id="GO:0003924">
    <property type="term" value="F:GTPase activity"/>
    <property type="evidence" value="ECO:0007669"/>
    <property type="project" value="InterPro"/>
</dbReference>
<dbReference type="GO" id="GO:0016150">
    <property type="term" value="F:translation release factor activity, codon nonspecific"/>
    <property type="evidence" value="ECO:0007669"/>
    <property type="project" value="TreeGrafter"/>
</dbReference>
<dbReference type="GO" id="GO:0016149">
    <property type="term" value="F:translation release factor activity, codon specific"/>
    <property type="evidence" value="ECO:0007669"/>
    <property type="project" value="UniProtKB-UniRule"/>
</dbReference>
<dbReference type="GO" id="GO:0006449">
    <property type="term" value="P:regulation of translational termination"/>
    <property type="evidence" value="ECO:0007669"/>
    <property type="project" value="UniProtKB-UniRule"/>
</dbReference>
<dbReference type="CDD" id="cd04169">
    <property type="entry name" value="RF3"/>
    <property type="match status" value="1"/>
</dbReference>
<dbReference type="CDD" id="cd16259">
    <property type="entry name" value="RF3_III"/>
    <property type="match status" value="1"/>
</dbReference>
<dbReference type="FunFam" id="2.40.30.10:FF:000040">
    <property type="entry name" value="Peptide chain release factor 3"/>
    <property type="match status" value="1"/>
</dbReference>
<dbReference type="FunFam" id="3.30.70.3280:FF:000001">
    <property type="entry name" value="Peptide chain release factor 3"/>
    <property type="match status" value="1"/>
</dbReference>
<dbReference type="FunFam" id="3.40.50.300:FF:000542">
    <property type="entry name" value="Peptide chain release factor 3"/>
    <property type="match status" value="1"/>
</dbReference>
<dbReference type="Gene3D" id="3.40.50.300">
    <property type="entry name" value="P-loop containing nucleotide triphosphate hydrolases"/>
    <property type="match status" value="1"/>
</dbReference>
<dbReference type="Gene3D" id="3.30.70.3280">
    <property type="entry name" value="Peptide chain release factor 3, domain III"/>
    <property type="match status" value="1"/>
</dbReference>
<dbReference type="Gene3D" id="2.40.30.10">
    <property type="entry name" value="Translation factors"/>
    <property type="match status" value="1"/>
</dbReference>
<dbReference type="HAMAP" id="MF_00072">
    <property type="entry name" value="Rel_fac_3"/>
    <property type="match status" value="1"/>
</dbReference>
<dbReference type="InterPro" id="IPR053905">
    <property type="entry name" value="EF-G-like_DII"/>
</dbReference>
<dbReference type="InterPro" id="IPR035647">
    <property type="entry name" value="EFG_III/V"/>
</dbReference>
<dbReference type="InterPro" id="IPR031157">
    <property type="entry name" value="G_TR_CS"/>
</dbReference>
<dbReference type="InterPro" id="IPR027417">
    <property type="entry name" value="P-loop_NTPase"/>
</dbReference>
<dbReference type="InterPro" id="IPR004548">
    <property type="entry name" value="PrfC"/>
</dbReference>
<dbReference type="InterPro" id="IPR032090">
    <property type="entry name" value="RF3_C"/>
</dbReference>
<dbReference type="InterPro" id="IPR038467">
    <property type="entry name" value="RF3_dom_3_sf"/>
</dbReference>
<dbReference type="InterPro" id="IPR041732">
    <property type="entry name" value="RF3_GTP-bd"/>
</dbReference>
<dbReference type="InterPro" id="IPR005225">
    <property type="entry name" value="Small_GTP-bd"/>
</dbReference>
<dbReference type="InterPro" id="IPR000795">
    <property type="entry name" value="T_Tr_GTP-bd_dom"/>
</dbReference>
<dbReference type="InterPro" id="IPR009000">
    <property type="entry name" value="Transl_B-barrel_sf"/>
</dbReference>
<dbReference type="NCBIfam" id="TIGR00503">
    <property type="entry name" value="prfC"/>
    <property type="match status" value="1"/>
</dbReference>
<dbReference type="NCBIfam" id="NF001964">
    <property type="entry name" value="PRK00741.1"/>
    <property type="match status" value="1"/>
</dbReference>
<dbReference type="NCBIfam" id="TIGR00231">
    <property type="entry name" value="small_GTP"/>
    <property type="match status" value="1"/>
</dbReference>
<dbReference type="PANTHER" id="PTHR43556">
    <property type="entry name" value="PEPTIDE CHAIN RELEASE FACTOR RF3"/>
    <property type="match status" value="1"/>
</dbReference>
<dbReference type="PANTHER" id="PTHR43556:SF2">
    <property type="entry name" value="PEPTIDE CHAIN RELEASE FACTOR RF3"/>
    <property type="match status" value="1"/>
</dbReference>
<dbReference type="Pfam" id="PF22042">
    <property type="entry name" value="EF-G_D2"/>
    <property type="match status" value="1"/>
</dbReference>
<dbReference type="Pfam" id="PF00009">
    <property type="entry name" value="GTP_EFTU"/>
    <property type="match status" value="1"/>
</dbReference>
<dbReference type="Pfam" id="PF16658">
    <property type="entry name" value="RF3_C"/>
    <property type="match status" value="1"/>
</dbReference>
<dbReference type="PRINTS" id="PR00315">
    <property type="entry name" value="ELONGATNFCT"/>
</dbReference>
<dbReference type="PRINTS" id="PR01037">
    <property type="entry name" value="TCRTETOQM"/>
</dbReference>
<dbReference type="SUPFAM" id="SSF54980">
    <property type="entry name" value="EF-G C-terminal domain-like"/>
    <property type="match status" value="1"/>
</dbReference>
<dbReference type="SUPFAM" id="SSF52540">
    <property type="entry name" value="P-loop containing nucleoside triphosphate hydrolases"/>
    <property type="match status" value="1"/>
</dbReference>
<dbReference type="SUPFAM" id="SSF50447">
    <property type="entry name" value="Translation proteins"/>
    <property type="match status" value="1"/>
</dbReference>
<dbReference type="PROSITE" id="PS00301">
    <property type="entry name" value="G_TR_1"/>
    <property type="match status" value="1"/>
</dbReference>
<dbReference type="PROSITE" id="PS51722">
    <property type="entry name" value="G_TR_2"/>
    <property type="match status" value="1"/>
</dbReference>
<gene>
    <name evidence="1" type="primary">prfC</name>
    <name type="ordered locus">MGAS2096_Spy1226</name>
</gene>
<name>RF3_STRPB</name>
<organism>
    <name type="scientific">Streptococcus pyogenes serotype M12 (strain MGAS2096)</name>
    <dbReference type="NCBI Taxonomy" id="370553"/>
    <lineage>
        <taxon>Bacteria</taxon>
        <taxon>Bacillati</taxon>
        <taxon>Bacillota</taxon>
        <taxon>Bacilli</taxon>
        <taxon>Lactobacillales</taxon>
        <taxon>Streptococcaceae</taxon>
        <taxon>Streptococcus</taxon>
    </lineage>
</organism>
<protein>
    <recommendedName>
        <fullName evidence="1">Peptide chain release factor 3</fullName>
        <shortName evidence="1">RF-3</shortName>
    </recommendedName>
</protein>